<keyword id="KW-0007">Acetylation</keyword>
<keyword id="KW-0342">GTP-binding</keyword>
<keyword id="KW-0378">Hydrolase</keyword>
<keyword id="KW-0396">Initiation factor</keyword>
<keyword id="KW-0547">Nucleotide-binding</keyword>
<keyword id="KW-0597">Phosphoprotein</keyword>
<keyword id="KW-0648">Protein biosynthesis</keyword>
<keyword id="KW-1185">Reference proteome</keyword>
<protein>
    <recommendedName>
        <fullName>Eukaryotic translation initiation factor 2 subunit 3, Y-linked</fullName>
        <ecNumber>3.6.5.3</ecNumber>
    </recommendedName>
    <alternativeName>
        <fullName>Eukaryotic translation initiation factor 2 subunit gamma, Y-linked</fullName>
        <shortName>eIF-2-gamma Y</shortName>
    </alternativeName>
</protein>
<feature type="initiator methionine" description="Removed" evidence="3">
    <location>
        <position position="1"/>
    </location>
</feature>
<feature type="chain" id="PRO_0000435884" description="Eukaryotic translation initiation factor 2 subunit 3, Y-linked">
    <location>
        <begin position="2"/>
        <end position="472"/>
    </location>
</feature>
<feature type="domain" description="tr-type G" evidence="5">
    <location>
        <begin position="39"/>
        <end position="247"/>
    </location>
</feature>
<feature type="region of interest" description="G1" evidence="5">
    <location>
        <begin position="48"/>
        <end position="55"/>
    </location>
</feature>
<feature type="region of interest" description="G2" evidence="5">
    <location>
        <begin position="76"/>
        <end position="80"/>
    </location>
</feature>
<feature type="region of interest" description="G3" evidence="5">
    <location>
        <begin position="134"/>
        <end position="137"/>
    </location>
</feature>
<feature type="region of interest" description="G4" evidence="5">
    <location>
        <begin position="190"/>
        <end position="193"/>
    </location>
</feature>
<feature type="region of interest" description="G5" evidence="5">
    <location>
        <begin position="225"/>
        <end position="227"/>
    </location>
</feature>
<feature type="binding site" evidence="2">
    <location>
        <begin position="51"/>
        <end position="56"/>
    </location>
    <ligand>
        <name>GTP</name>
        <dbReference type="ChEBI" id="CHEBI:37565"/>
    </ligand>
</feature>
<feature type="binding site" evidence="2">
    <location>
        <begin position="190"/>
        <end position="193"/>
    </location>
    <ligand>
        <name>GTP</name>
        <dbReference type="ChEBI" id="CHEBI:37565"/>
    </ligand>
</feature>
<feature type="binding site" evidence="2">
    <location>
        <begin position="225"/>
        <end position="227"/>
    </location>
    <ligand>
        <name>GTP</name>
        <dbReference type="ChEBI" id="CHEBI:37565"/>
    </ligand>
</feature>
<feature type="modified residue" description="N-acetylalanine" evidence="3">
    <location>
        <position position="2"/>
    </location>
</feature>
<feature type="modified residue" description="Phosphoserine" evidence="4">
    <location>
        <position position="16"/>
    </location>
</feature>
<feature type="sequence conflict" description="In Ref. 1; JAC06680." evidence="8" ref="1">
    <original>Q</original>
    <variation>K</variation>
    <location>
        <position position="39"/>
    </location>
</feature>
<name>IF2H_RAT</name>
<proteinExistence type="evidence at transcript level"/>
<dbReference type="EC" id="3.6.5.3"/>
<dbReference type="EMBL" id="GATN01000003">
    <property type="protein sequence ID" value="JAC06680.1"/>
    <property type="molecule type" value="mRNA"/>
</dbReference>
<dbReference type="EMBL" id="AABR07038871">
    <property type="status" value="NOT_ANNOTATED_CDS"/>
    <property type="molecule type" value="Genomic_DNA"/>
</dbReference>
<dbReference type="EMBL" id="AC242953">
    <property type="status" value="NOT_ANNOTATED_CDS"/>
    <property type="molecule type" value="Genomic_DNA"/>
</dbReference>
<dbReference type="EMBL" id="BC158736">
    <property type="protein sequence ID" value="AAI58737.1"/>
    <property type="molecule type" value="mRNA"/>
</dbReference>
<dbReference type="EMBL" id="FJ775731">
    <property type="protein sequence ID" value="ACX55123.1"/>
    <property type="molecule type" value="mRNA"/>
</dbReference>
<dbReference type="EMBL" id="FJ775732">
    <property type="protein sequence ID" value="ACX55124.1"/>
    <property type="molecule type" value="mRNA"/>
</dbReference>
<dbReference type="RefSeq" id="NP_001161138.1">
    <property type="nucleotide sequence ID" value="NM_001167666.1"/>
</dbReference>
<dbReference type="SMR" id="C9WPN6"/>
<dbReference type="FunCoup" id="C9WPN6">
    <property type="interactions" value="1618"/>
</dbReference>
<dbReference type="IntAct" id="C9WPN6">
    <property type="interactions" value="1"/>
</dbReference>
<dbReference type="STRING" id="10116.ENSRNOP00000068958"/>
<dbReference type="iPTMnet" id="C9WPN6"/>
<dbReference type="PhosphoSitePlus" id="C9WPN6"/>
<dbReference type="jPOST" id="C9WPN6"/>
<dbReference type="Ensembl" id="ENSRNOT00000088593.3">
    <property type="protein sequence ID" value="ENSRNOP00000068958.1"/>
    <property type="gene ID" value="ENSRNOG00000060048.3"/>
</dbReference>
<dbReference type="GeneID" id="100312984"/>
<dbReference type="KEGG" id="rno:100312984"/>
<dbReference type="AGR" id="RGD:2314438"/>
<dbReference type="CTD" id="26908"/>
<dbReference type="RGD" id="2314438">
    <property type="gene designation" value="Eif2s3y"/>
</dbReference>
<dbReference type="GeneTree" id="ENSGT00550000074801"/>
<dbReference type="InParanoid" id="C9WPN6"/>
<dbReference type="OMA" id="ILCEYIT"/>
<dbReference type="OrthoDB" id="1045173at2759"/>
<dbReference type="PRO" id="PR:C9WPN6"/>
<dbReference type="Proteomes" id="UP000002494">
    <property type="component" value="Chromosome Y"/>
</dbReference>
<dbReference type="Bgee" id="ENSRNOG00000060048">
    <property type="expression patterns" value="Expressed in thymus and 18 other cell types or tissues"/>
</dbReference>
<dbReference type="GO" id="GO:0005850">
    <property type="term" value="C:eukaryotic translation initiation factor 2 complex"/>
    <property type="evidence" value="ECO:0000250"/>
    <property type="project" value="UniProtKB"/>
</dbReference>
<dbReference type="GO" id="GO:0005525">
    <property type="term" value="F:GTP binding"/>
    <property type="evidence" value="ECO:0007669"/>
    <property type="project" value="UniProtKB-KW"/>
</dbReference>
<dbReference type="GO" id="GO:0003924">
    <property type="term" value="F:GTPase activity"/>
    <property type="evidence" value="ECO:0007669"/>
    <property type="project" value="InterPro"/>
</dbReference>
<dbReference type="GO" id="GO:0003743">
    <property type="term" value="F:translation initiation factor activity"/>
    <property type="evidence" value="ECO:0000318"/>
    <property type="project" value="GO_Central"/>
</dbReference>
<dbReference type="GO" id="GO:0000049">
    <property type="term" value="F:tRNA binding"/>
    <property type="evidence" value="ECO:0007669"/>
    <property type="project" value="InterPro"/>
</dbReference>
<dbReference type="GO" id="GO:0001731">
    <property type="term" value="P:formation of translation preinitiation complex"/>
    <property type="evidence" value="ECO:0000318"/>
    <property type="project" value="GO_Central"/>
</dbReference>
<dbReference type="GO" id="GO:2000020">
    <property type="term" value="P:positive regulation of male gonad development"/>
    <property type="evidence" value="ECO:0007669"/>
    <property type="project" value="Ensembl"/>
</dbReference>
<dbReference type="GO" id="GO:0007283">
    <property type="term" value="P:spermatogenesis"/>
    <property type="evidence" value="ECO:0007669"/>
    <property type="project" value="Ensembl"/>
</dbReference>
<dbReference type="CDD" id="cd01888">
    <property type="entry name" value="eIF2_gamma"/>
    <property type="match status" value="1"/>
</dbReference>
<dbReference type="CDD" id="cd03688">
    <property type="entry name" value="eIF2_gamma_II"/>
    <property type="match status" value="1"/>
</dbReference>
<dbReference type="CDD" id="cd15490">
    <property type="entry name" value="eIF2_gamma_III"/>
    <property type="match status" value="1"/>
</dbReference>
<dbReference type="FunFam" id="2.40.30.10:FF:000009">
    <property type="entry name" value="Eukaryotic translation initiation factor 2 subunit gamma"/>
    <property type="match status" value="1"/>
</dbReference>
<dbReference type="FunFam" id="2.40.30.10:FF:000011">
    <property type="entry name" value="Eukaryotic translation initiation factor 2 subunit gamma"/>
    <property type="match status" value="1"/>
</dbReference>
<dbReference type="FunFam" id="3.40.50.300:FF:000065">
    <property type="entry name" value="Eukaryotic translation initiation factor 2 subunit gamma"/>
    <property type="match status" value="1"/>
</dbReference>
<dbReference type="Gene3D" id="3.40.50.300">
    <property type="entry name" value="P-loop containing nucleotide triphosphate hydrolases"/>
    <property type="match status" value="1"/>
</dbReference>
<dbReference type="Gene3D" id="2.40.30.10">
    <property type="entry name" value="Translation factors"/>
    <property type="match status" value="2"/>
</dbReference>
<dbReference type="InterPro" id="IPR004161">
    <property type="entry name" value="EFTu-like_2"/>
</dbReference>
<dbReference type="InterPro" id="IPR050543">
    <property type="entry name" value="eIF2G"/>
</dbReference>
<dbReference type="InterPro" id="IPR015256">
    <property type="entry name" value="eIF2g_C"/>
</dbReference>
<dbReference type="InterPro" id="IPR044127">
    <property type="entry name" value="eIF2g_dom_2"/>
</dbReference>
<dbReference type="InterPro" id="IPR044128">
    <property type="entry name" value="eIF2g_GTP-bd"/>
</dbReference>
<dbReference type="InterPro" id="IPR027417">
    <property type="entry name" value="P-loop_NTPase"/>
</dbReference>
<dbReference type="InterPro" id="IPR000795">
    <property type="entry name" value="T_Tr_GTP-bd_dom"/>
</dbReference>
<dbReference type="InterPro" id="IPR009000">
    <property type="entry name" value="Transl_B-barrel_sf"/>
</dbReference>
<dbReference type="InterPro" id="IPR009001">
    <property type="entry name" value="Transl_elong_EF1A/Init_IF2_C"/>
</dbReference>
<dbReference type="NCBIfam" id="NF003077">
    <property type="entry name" value="PRK04000.1"/>
    <property type="match status" value="1"/>
</dbReference>
<dbReference type="PANTHER" id="PTHR42854">
    <property type="entry name" value="EUKARYOTIC TRANSLATION INITIATION FACTOR 2 SUBUNIT 3 FAMILY MEMBER"/>
    <property type="match status" value="1"/>
</dbReference>
<dbReference type="PANTHER" id="PTHR42854:SF4">
    <property type="entry name" value="EUKARYOTIC TRANSLATION INITIATION FACTOR 2 SUBUNIT 3, Y-LINKED"/>
    <property type="match status" value="1"/>
</dbReference>
<dbReference type="Pfam" id="PF09173">
    <property type="entry name" value="eIF2_C"/>
    <property type="match status" value="1"/>
</dbReference>
<dbReference type="Pfam" id="PF00009">
    <property type="entry name" value="GTP_EFTU"/>
    <property type="match status" value="1"/>
</dbReference>
<dbReference type="Pfam" id="PF03144">
    <property type="entry name" value="GTP_EFTU_D2"/>
    <property type="match status" value="1"/>
</dbReference>
<dbReference type="PRINTS" id="PR00315">
    <property type="entry name" value="ELONGATNFCT"/>
</dbReference>
<dbReference type="SUPFAM" id="SSF50465">
    <property type="entry name" value="EF-Tu/eEF-1alpha/eIF2-gamma C-terminal domain"/>
    <property type="match status" value="1"/>
</dbReference>
<dbReference type="SUPFAM" id="SSF52540">
    <property type="entry name" value="P-loop containing nucleoside triphosphate hydrolases"/>
    <property type="match status" value="1"/>
</dbReference>
<dbReference type="SUPFAM" id="SSF50447">
    <property type="entry name" value="Translation proteins"/>
    <property type="match status" value="1"/>
</dbReference>
<dbReference type="PROSITE" id="PS51722">
    <property type="entry name" value="G_TR_2"/>
    <property type="match status" value="1"/>
</dbReference>
<evidence type="ECO:0000250" key="1">
    <source>
        <dbReference type="UniProtKB" id="P05198"/>
    </source>
</evidence>
<evidence type="ECO:0000250" key="2">
    <source>
        <dbReference type="UniProtKB" id="P32481"/>
    </source>
</evidence>
<evidence type="ECO:0000250" key="3">
    <source>
        <dbReference type="UniProtKB" id="P41091"/>
    </source>
</evidence>
<evidence type="ECO:0000250" key="4">
    <source>
        <dbReference type="UniProtKB" id="Q9Z0N1"/>
    </source>
</evidence>
<evidence type="ECO:0000255" key="5">
    <source>
        <dbReference type="PROSITE-ProRule" id="PRU01059"/>
    </source>
</evidence>
<evidence type="ECO:0000269" key="6">
    <source>
    </source>
</evidence>
<evidence type="ECO:0000269" key="7">
    <source>
    </source>
</evidence>
<evidence type="ECO:0000305" key="8"/>
<accession>C9WPN6</accession>
<accession>A0A096MIV4</accession>
<accession>A0A0G2JU42</accession>
<accession>C9WPN7</accession>
<accession>W8CEN7</accession>
<reference key="1">
    <citation type="journal article" date="2014" name="Nature">
        <title>Origins and functional evolution of Y chromosomes across mammals.</title>
        <authorList>
            <person name="Cortez D."/>
            <person name="Marin R."/>
            <person name="Toledo-Flores D."/>
            <person name="Froidevaux L."/>
            <person name="Liechti A."/>
            <person name="Waters P.D."/>
            <person name="Gruetzner F."/>
            <person name="Kaessmann H."/>
        </authorList>
    </citation>
    <scope>NUCLEOTIDE SEQUENCE [MRNA]</scope>
</reference>
<reference key="2">
    <citation type="journal article" date="2004" name="Nature">
        <title>Genome sequence of the Brown Norway rat yields insights into mammalian evolution.</title>
        <authorList>
            <person name="Gibbs R.A."/>
            <person name="Weinstock G.M."/>
            <person name="Metzker M.L."/>
            <person name="Muzny D.M."/>
            <person name="Sodergren E.J."/>
            <person name="Scherer S."/>
            <person name="Scott G."/>
            <person name="Steffen D."/>
            <person name="Worley K.C."/>
            <person name="Burch P.E."/>
            <person name="Okwuonu G."/>
            <person name="Hines S."/>
            <person name="Lewis L."/>
            <person name="Deramo C."/>
            <person name="Delgado O."/>
            <person name="Dugan-Rocha S."/>
            <person name="Miner G."/>
            <person name="Morgan M."/>
            <person name="Hawes A."/>
            <person name="Gill R."/>
            <person name="Holt R.A."/>
            <person name="Adams M.D."/>
            <person name="Amanatides P.G."/>
            <person name="Baden-Tillson H."/>
            <person name="Barnstead M."/>
            <person name="Chin S."/>
            <person name="Evans C.A."/>
            <person name="Ferriera S."/>
            <person name="Fosler C."/>
            <person name="Glodek A."/>
            <person name="Gu Z."/>
            <person name="Jennings D."/>
            <person name="Kraft C.L."/>
            <person name="Nguyen T."/>
            <person name="Pfannkoch C.M."/>
            <person name="Sitter C."/>
            <person name="Sutton G.G."/>
            <person name="Venter J.C."/>
            <person name="Woodage T."/>
            <person name="Smith D."/>
            <person name="Lee H.-M."/>
            <person name="Gustafson E."/>
            <person name="Cahill P."/>
            <person name="Kana A."/>
            <person name="Doucette-Stamm L."/>
            <person name="Weinstock K."/>
            <person name="Fechtel K."/>
            <person name="Weiss R.B."/>
            <person name="Dunn D.M."/>
            <person name="Green E.D."/>
            <person name="Blakesley R.W."/>
            <person name="Bouffard G.G."/>
            <person name="De Jong P.J."/>
            <person name="Osoegawa K."/>
            <person name="Zhu B."/>
            <person name="Marra M."/>
            <person name="Schein J."/>
            <person name="Bosdet I."/>
            <person name="Fjell C."/>
            <person name="Jones S."/>
            <person name="Krzywinski M."/>
            <person name="Mathewson C."/>
            <person name="Siddiqui A."/>
            <person name="Wye N."/>
            <person name="McPherson J."/>
            <person name="Zhao S."/>
            <person name="Fraser C.M."/>
            <person name="Shetty J."/>
            <person name="Shatsman S."/>
            <person name="Geer K."/>
            <person name="Chen Y."/>
            <person name="Abramzon S."/>
            <person name="Nierman W.C."/>
            <person name="Havlak P.H."/>
            <person name="Chen R."/>
            <person name="Durbin K.J."/>
            <person name="Egan A."/>
            <person name="Ren Y."/>
            <person name="Song X.-Z."/>
            <person name="Li B."/>
            <person name="Liu Y."/>
            <person name="Qin X."/>
            <person name="Cawley S."/>
            <person name="Cooney A.J."/>
            <person name="D'Souza L.M."/>
            <person name="Martin K."/>
            <person name="Wu J.Q."/>
            <person name="Gonzalez-Garay M.L."/>
            <person name="Jackson A.R."/>
            <person name="Kalafus K.J."/>
            <person name="McLeod M.P."/>
            <person name="Milosavljevic A."/>
            <person name="Virk D."/>
            <person name="Volkov A."/>
            <person name="Wheeler D.A."/>
            <person name="Zhang Z."/>
            <person name="Bailey J.A."/>
            <person name="Eichler E.E."/>
            <person name="Tuzun E."/>
            <person name="Birney E."/>
            <person name="Mongin E."/>
            <person name="Ureta-Vidal A."/>
            <person name="Woodwark C."/>
            <person name="Zdobnov E."/>
            <person name="Bork P."/>
            <person name="Suyama M."/>
            <person name="Torrents D."/>
            <person name="Alexandersson M."/>
            <person name="Trask B.J."/>
            <person name="Young J.M."/>
            <person name="Huang H."/>
            <person name="Wang H."/>
            <person name="Xing H."/>
            <person name="Daniels S."/>
            <person name="Gietzen D."/>
            <person name="Schmidt J."/>
            <person name="Stevens K."/>
            <person name="Vitt U."/>
            <person name="Wingrove J."/>
            <person name="Camara F."/>
            <person name="Mar Alba M."/>
            <person name="Abril J.F."/>
            <person name="Guigo R."/>
            <person name="Smit A."/>
            <person name="Dubchak I."/>
            <person name="Rubin E.M."/>
            <person name="Couronne O."/>
            <person name="Poliakov A."/>
            <person name="Huebner N."/>
            <person name="Ganten D."/>
            <person name="Goesele C."/>
            <person name="Hummel O."/>
            <person name="Kreitler T."/>
            <person name="Lee Y.-A."/>
            <person name="Monti J."/>
            <person name="Schulz H."/>
            <person name="Zimdahl H."/>
            <person name="Himmelbauer H."/>
            <person name="Lehrach H."/>
            <person name="Jacob H.J."/>
            <person name="Bromberg S."/>
            <person name="Gullings-Handley J."/>
            <person name="Jensen-Seaman M.I."/>
            <person name="Kwitek A.E."/>
            <person name="Lazar J."/>
            <person name="Pasko D."/>
            <person name="Tonellato P.J."/>
            <person name="Twigger S."/>
            <person name="Ponting C.P."/>
            <person name="Duarte J.M."/>
            <person name="Rice S."/>
            <person name="Goodstadt L."/>
            <person name="Beatson S.A."/>
            <person name="Emes R.D."/>
            <person name="Winter E.E."/>
            <person name="Webber C."/>
            <person name="Brandt P."/>
            <person name="Nyakatura G."/>
            <person name="Adetobi M."/>
            <person name="Chiaromonte F."/>
            <person name="Elnitski L."/>
            <person name="Eswara P."/>
            <person name="Hardison R.C."/>
            <person name="Hou M."/>
            <person name="Kolbe D."/>
            <person name="Makova K."/>
            <person name="Miller W."/>
            <person name="Nekrutenko A."/>
            <person name="Riemer C."/>
            <person name="Schwartz S."/>
            <person name="Taylor J."/>
            <person name="Yang S."/>
            <person name="Zhang Y."/>
            <person name="Lindpaintner K."/>
            <person name="Andrews T.D."/>
            <person name="Caccamo M."/>
            <person name="Clamp M."/>
            <person name="Clarke L."/>
            <person name="Curwen V."/>
            <person name="Durbin R.M."/>
            <person name="Eyras E."/>
            <person name="Searle S.M."/>
            <person name="Cooper G.M."/>
            <person name="Batzoglou S."/>
            <person name="Brudno M."/>
            <person name="Sidow A."/>
            <person name="Stone E.A."/>
            <person name="Payseur B.A."/>
            <person name="Bourque G."/>
            <person name="Lopez-Otin C."/>
            <person name="Puente X.S."/>
            <person name="Chakrabarti K."/>
            <person name="Chatterji S."/>
            <person name="Dewey C."/>
            <person name="Pachter L."/>
            <person name="Bray N."/>
            <person name="Yap V.B."/>
            <person name="Caspi A."/>
            <person name="Tesler G."/>
            <person name="Pevzner P.A."/>
            <person name="Haussler D."/>
            <person name="Roskin K.M."/>
            <person name="Baertsch R."/>
            <person name="Clawson H."/>
            <person name="Furey T.S."/>
            <person name="Hinrichs A.S."/>
            <person name="Karolchik D."/>
            <person name="Kent W.J."/>
            <person name="Rosenbloom K.R."/>
            <person name="Trumbower H."/>
            <person name="Weirauch M."/>
            <person name="Cooper D.N."/>
            <person name="Stenson P.D."/>
            <person name="Ma B."/>
            <person name="Brent M."/>
            <person name="Arumugam M."/>
            <person name="Shteynberg D."/>
            <person name="Copley R.R."/>
            <person name="Taylor M.S."/>
            <person name="Riethman H."/>
            <person name="Mudunuri U."/>
            <person name="Peterson J."/>
            <person name="Guyer M."/>
            <person name="Felsenfeld A."/>
            <person name="Old S."/>
            <person name="Mockrin S."/>
            <person name="Collins F.S."/>
        </authorList>
    </citation>
    <scope>NUCLEOTIDE SEQUENCE [LARGE SCALE GENOMIC DNA]</scope>
    <source>
        <strain>Brown Norway</strain>
    </source>
</reference>
<reference key="3">
    <citation type="journal article" date="2004" name="Genome Res.">
        <title>The status, quality, and expansion of the NIH full-length cDNA project: the Mammalian Gene Collection (MGC).</title>
        <authorList>
            <consortium name="The MGC Project Team"/>
        </authorList>
    </citation>
    <scope>NUCLEOTIDE SEQUENCE [LARGE SCALE MRNA]</scope>
    <source>
        <strain>Brown Norway/Mcwi</strain>
        <tissue>Embryonic spleen</tissue>
    </source>
</reference>
<reference key="4">
    <citation type="journal article" date="1998" name="Hum. Mol. Genet.">
        <title>Characterization of genes encoding translation initiation factor eIF-2gamma in mouse and human: sex chromosome localization, escape from X-inactivation and evolution.</title>
        <authorList>
            <person name="Ehrmann I.E."/>
            <person name="Ellis P.S."/>
            <person name="Mazeyrat S."/>
            <person name="Duthie S."/>
            <person name="Brockdorff N."/>
            <person name="Mattei M.-G."/>
            <person name="Gavin M.A."/>
            <person name="Affara N.A."/>
            <person name="Brown G.M."/>
            <person name="Simpson E."/>
            <person name="Mitchell M.J."/>
            <person name="Scott D.M."/>
        </authorList>
    </citation>
    <scope>IDENTIFICATION OF EIF2S3 HOMOLOGS</scope>
</reference>
<reference key="5">
    <citation type="journal article" date="2009" name="Genome Biol. Evol.">
        <title>Evidence that replication-associated mutation alone does not explain between-chromosome differences in substitution rates.</title>
        <authorList>
            <person name="Pink C.J."/>
            <person name="Swaminathan S.K."/>
            <person name="Dunham I."/>
            <person name="Rogers J."/>
            <person name="Ward A."/>
            <person name="Hurst L.D."/>
        </authorList>
    </citation>
    <scope>NUCLEOTIDE SEQUENCE [MRNA] OF 19-290 AND 349-472</scope>
    <source>
        <strain>Wistar</strain>
        <tissue>Testis</tissue>
    </source>
</reference>
<reference key="6">
    <citation type="journal article" date="2014" name="PLoS ONE">
        <title>The incidence of sexually dimorphic gene expression varies greatly between tissues in the rat.</title>
        <authorList>
            <person name="Huby R.D."/>
            <person name="Glaves P."/>
            <person name="Jackson R."/>
        </authorList>
    </citation>
    <scope>TISSUE SPECIFICITY</scope>
</reference>
<comment type="function">
    <text evidence="1 4">Member of the eIF2 complex that functions in the early steps of protein synthesis by forming a ternary complex with GTP and initiator tRNA. This complex binds to a 40S ribosomal subunit, followed by mRNA binding to form the 43S pre-initiation complex (43S PIC). Junction of the 60S ribosomal subunit to form the 80S initiation complex is preceded by hydrolysis of the GTP bound to eIF2 and release of an eIF2-GDP binary complex. In order for eIF2 to recycle and catalyze another round of initiation, the GDP bound to eIF2 must exchange with GTP by way of a reaction catalyzed by eIF-2B (By similarity). Along with its paralog on chromosome X, may contribute to spermatogenesis up to the round spermatid stage (By similarity).</text>
</comment>
<comment type="catalytic activity">
    <reaction evidence="2">
        <text>GTP + H2O = GDP + phosphate + H(+)</text>
        <dbReference type="Rhea" id="RHEA:19669"/>
        <dbReference type="ChEBI" id="CHEBI:15377"/>
        <dbReference type="ChEBI" id="CHEBI:15378"/>
        <dbReference type="ChEBI" id="CHEBI:37565"/>
        <dbReference type="ChEBI" id="CHEBI:43474"/>
        <dbReference type="ChEBI" id="CHEBI:58189"/>
        <dbReference type="EC" id="3.6.5.3"/>
    </reaction>
</comment>
<comment type="subunit">
    <text evidence="3">eIF2 is a heterotrimer composed of an alpha (EIF2S1), a beta (EIF2S2) and a gamma (Eif2s3x and Eif2s3y) chain. eIF2 is member of the 43S pre-initiation complex (43S PIC).</text>
</comment>
<comment type="tissue specificity">
    <text evidence="6">Widely expressed in males.</text>
</comment>
<comment type="miscellaneous">
    <text evidence="7">Has a homolog on chromosome X (Eif2s3x).</text>
</comment>
<comment type="similarity">
    <text evidence="5">Belongs to the TRAFAC class translation factor GTPase superfamily. Classic translation factor GTPase family. EIF2G subfamily.</text>
</comment>
<sequence>MAGGEAGVTLGQPHLSRQDLATLDVTKLTPLSHEIISRQATINIGTIGHVAHGKSTVVKAISGVHTVRFKNELERNITIKLGYANAKIYKLDDSSCPRPECYRSCGSSTPDEFPSDIPGIKGNFRLVRHVSFVDCPGHDILMATMLNGAAVMDAALLLIAGNESCPQPQTSEHLAAIEIMKLKHILILQNKIDLVKESQAKEQYEQILAFVQGTVAEGAPIIPISAQLKYNIEVVCEYIVKKIPVPLRDFTSEPRLIVIRSFDVNKPGCEVDDLKGGVAGGSILKGVLKVGQEIEVRPGIVSKDSEGKLMCKPIFSKIVSLFAEHNDLQYAAPGGLIGVGTKIDPTLCRADRMVGQVLGAVGALPEIFTELEISYFLLRRLLGVRTEGDKKAAKVQKLSKNEVLMVNIGSLSTGGRVSAVKADLGKIVLTNPVCTEVGEKIALSRRVEKHWRLIGWGQIRRGVTIKPTIDDE</sequence>
<gene>
    <name type="primary">Eif2s3y</name>
</gene>
<organism>
    <name type="scientific">Rattus norvegicus</name>
    <name type="common">Rat</name>
    <dbReference type="NCBI Taxonomy" id="10116"/>
    <lineage>
        <taxon>Eukaryota</taxon>
        <taxon>Metazoa</taxon>
        <taxon>Chordata</taxon>
        <taxon>Craniata</taxon>
        <taxon>Vertebrata</taxon>
        <taxon>Euteleostomi</taxon>
        <taxon>Mammalia</taxon>
        <taxon>Eutheria</taxon>
        <taxon>Euarchontoglires</taxon>
        <taxon>Glires</taxon>
        <taxon>Rodentia</taxon>
        <taxon>Myomorpha</taxon>
        <taxon>Muroidea</taxon>
        <taxon>Muridae</taxon>
        <taxon>Murinae</taxon>
        <taxon>Rattus</taxon>
    </lineage>
</organism>